<name>NUOI_DEIGD</name>
<sequence>MGVLDIAKGMGVTLGKLFQKPVTVSYPEERVTLQPRFRGRHVLTRHPDTGLEKCIGCSLCAAVCPAYAIYVEAAENDPLNPTSPGERYAKVYEINMLRCIFCGLCEEACPTGAVVLGNEFEMADYRSRDFVYGKEDMLVGVEGSLPQRREAQRTGKPVRLGFKVPKGPRPELEGVEYPR</sequence>
<organism>
    <name type="scientific">Deinococcus geothermalis (strain DSM 11300 / CIP 105573 / AG-3a)</name>
    <dbReference type="NCBI Taxonomy" id="319795"/>
    <lineage>
        <taxon>Bacteria</taxon>
        <taxon>Thermotogati</taxon>
        <taxon>Deinococcota</taxon>
        <taxon>Deinococci</taxon>
        <taxon>Deinococcales</taxon>
        <taxon>Deinococcaceae</taxon>
        <taxon>Deinococcus</taxon>
    </lineage>
</organism>
<evidence type="ECO:0000255" key="1">
    <source>
        <dbReference type="HAMAP-Rule" id="MF_01351"/>
    </source>
</evidence>
<evidence type="ECO:0000256" key="2">
    <source>
        <dbReference type="SAM" id="MobiDB-lite"/>
    </source>
</evidence>
<protein>
    <recommendedName>
        <fullName evidence="1">NADH-quinone oxidoreductase subunit I</fullName>
        <ecNumber evidence="1">7.1.1.-</ecNumber>
    </recommendedName>
    <alternativeName>
        <fullName evidence="1">NADH dehydrogenase I subunit I</fullName>
    </alternativeName>
    <alternativeName>
        <fullName evidence="1">NDH-1 subunit I</fullName>
    </alternativeName>
</protein>
<dbReference type="EC" id="7.1.1.-" evidence="1"/>
<dbReference type="EMBL" id="CP000359">
    <property type="protein sequence ID" value="ABF45219.1"/>
    <property type="molecule type" value="Genomic_DNA"/>
</dbReference>
<dbReference type="RefSeq" id="WP_011530057.1">
    <property type="nucleotide sequence ID" value="NC_008025.1"/>
</dbReference>
<dbReference type="SMR" id="Q1IZW5"/>
<dbReference type="STRING" id="319795.Dgeo_0917"/>
<dbReference type="KEGG" id="dge:Dgeo_0917"/>
<dbReference type="eggNOG" id="COG1143">
    <property type="taxonomic scope" value="Bacteria"/>
</dbReference>
<dbReference type="HOGENOM" id="CLU_067218_4_3_0"/>
<dbReference type="Proteomes" id="UP000002431">
    <property type="component" value="Chromosome"/>
</dbReference>
<dbReference type="GO" id="GO:0005886">
    <property type="term" value="C:plasma membrane"/>
    <property type="evidence" value="ECO:0007669"/>
    <property type="project" value="UniProtKB-SubCell"/>
</dbReference>
<dbReference type="GO" id="GO:0051539">
    <property type="term" value="F:4 iron, 4 sulfur cluster binding"/>
    <property type="evidence" value="ECO:0007669"/>
    <property type="project" value="UniProtKB-KW"/>
</dbReference>
<dbReference type="GO" id="GO:0005506">
    <property type="term" value="F:iron ion binding"/>
    <property type="evidence" value="ECO:0007669"/>
    <property type="project" value="UniProtKB-UniRule"/>
</dbReference>
<dbReference type="GO" id="GO:0050136">
    <property type="term" value="F:NADH:ubiquinone reductase (non-electrogenic) activity"/>
    <property type="evidence" value="ECO:0007669"/>
    <property type="project" value="UniProtKB-UniRule"/>
</dbReference>
<dbReference type="GO" id="GO:0048038">
    <property type="term" value="F:quinone binding"/>
    <property type="evidence" value="ECO:0007669"/>
    <property type="project" value="UniProtKB-KW"/>
</dbReference>
<dbReference type="GO" id="GO:0009060">
    <property type="term" value="P:aerobic respiration"/>
    <property type="evidence" value="ECO:0007669"/>
    <property type="project" value="TreeGrafter"/>
</dbReference>
<dbReference type="Gene3D" id="3.30.70.3270">
    <property type="match status" value="1"/>
</dbReference>
<dbReference type="HAMAP" id="MF_01351">
    <property type="entry name" value="NDH1_NuoI"/>
    <property type="match status" value="1"/>
</dbReference>
<dbReference type="InterPro" id="IPR017896">
    <property type="entry name" value="4Fe4S_Fe-S-bd"/>
</dbReference>
<dbReference type="InterPro" id="IPR017900">
    <property type="entry name" value="4Fe4S_Fe_S_CS"/>
</dbReference>
<dbReference type="InterPro" id="IPR010226">
    <property type="entry name" value="NADH_quinone_OxRdtase_chainI"/>
</dbReference>
<dbReference type="NCBIfam" id="TIGR01971">
    <property type="entry name" value="NuoI"/>
    <property type="match status" value="1"/>
</dbReference>
<dbReference type="NCBIfam" id="NF004537">
    <property type="entry name" value="PRK05888.1-3"/>
    <property type="match status" value="1"/>
</dbReference>
<dbReference type="PANTHER" id="PTHR10849:SF20">
    <property type="entry name" value="NADH DEHYDROGENASE [UBIQUINONE] IRON-SULFUR PROTEIN 8, MITOCHONDRIAL"/>
    <property type="match status" value="1"/>
</dbReference>
<dbReference type="PANTHER" id="PTHR10849">
    <property type="entry name" value="NADH DEHYDROGENASE UBIQUINONE IRON-SULFUR PROTEIN 8, MITOCHONDRIAL"/>
    <property type="match status" value="1"/>
</dbReference>
<dbReference type="Pfam" id="PF12838">
    <property type="entry name" value="Fer4_7"/>
    <property type="match status" value="1"/>
</dbReference>
<dbReference type="SUPFAM" id="SSF54862">
    <property type="entry name" value="4Fe-4S ferredoxins"/>
    <property type="match status" value="1"/>
</dbReference>
<dbReference type="PROSITE" id="PS00198">
    <property type="entry name" value="4FE4S_FER_1"/>
    <property type="match status" value="2"/>
</dbReference>
<dbReference type="PROSITE" id="PS51379">
    <property type="entry name" value="4FE4S_FER_2"/>
    <property type="match status" value="2"/>
</dbReference>
<comment type="function">
    <text evidence="1">NDH-1 shuttles electrons from NADH, via FMN and iron-sulfur (Fe-S) centers, to quinones in the respiratory chain. The immediate electron acceptor for the enzyme in this species is believed to be ubiquinone. Couples the redox reaction to proton translocation (for every two electrons transferred, four hydrogen ions are translocated across the cytoplasmic membrane), and thus conserves the redox energy in a proton gradient.</text>
</comment>
<comment type="catalytic activity">
    <reaction evidence="1">
        <text>a quinone + NADH + 5 H(+)(in) = a quinol + NAD(+) + 4 H(+)(out)</text>
        <dbReference type="Rhea" id="RHEA:57888"/>
        <dbReference type="ChEBI" id="CHEBI:15378"/>
        <dbReference type="ChEBI" id="CHEBI:24646"/>
        <dbReference type="ChEBI" id="CHEBI:57540"/>
        <dbReference type="ChEBI" id="CHEBI:57945"/>
        <dbReference type="ChEBI" id="CHEBI:132124"/>
    </reaction>
</comment>
<comment type="cofactor">
    <cofactor evidence="1">
        <name>[4Fe-4S] cluster</name>
        <dbReference type="ChEBI" id="CHEBI:49883"/>
    </cofactor>
    <text evidence="1">Binds 2 [4Fe-4S] clusters per subunit.</text>
</comment>
<comment type="subunit">
    <text evidence="1">NDH-1 is composed of 15 different subunits. Subunits NuoA, H, J, K, L, M, N constitute the membrane sector of the complex.</text>
</comment>
<comment type="subcellular location">
    <subcellularLocation>
        <location evidence="1">Cell membrane</location>
        <topology evidence="1">Peripheral membrane protein</topology>
    </subcellularLocation>
</comment>
<comment type="similarity">
    <text evidence="1">Belongs to the complex I 23 kDa subunit family.</text>
</comment>
<accession>Q1IZW5</accession>
<reference key="1">
    <citation type="submission" date="2006-04" db="EMBL/GenBank/DDBJ databases">
        <title>Complete sequence of chromosome of Deinococcus geothermalis DSM 11300.</title>
        <authorList>
            <person name="Copeland A."/>
            <person name="Lucas S."/>
            <person name="Lapidus A."/>
            <person name="Barry K."/>
            <person name="Detter J.C."/>
            <person name="Glavina del Rio T."/>
            <person name="Hammon N."/>
            <person name="Israni S."/>
            <person name="Dalin E."/>
            <person name="Tice H."/>
            <person name="Pitluck S."/>
            <person name="Brettin T."/>
            <person name="Bruce D."/>
            <person name="Han C."/>
            <person name="Tapia R."/>
            <person name="Saunders E."/>
            <person name="Gilna P."/>
            <person name="Schmutz J."/>
            <person name="Larimer F."/>
            <person name="Land M."/>
            <person name="Hauser L."/>
            <person name="Kyrpides N."/>
            <person name="Kim E."/>
            <person name="Daly M.J."/>
            <person name="Fredrickson J.K."/>
            <person name="Makarova K.S."/>
            <person name="Gaidamakova E.K."/>
            <person name="Zhai M."/>
            <person name="Richardson P."/>
        </authorList>
    </citation>
    <scope>NUCLEOTIDE SEQUENCE [LARGE SCALE GENOMIC DNA]</scope>
    <source>
        <strain>DSM 11300 / CIP 105573 / AG-3a</strain>
    </source>
</reference>
<feature type="chain" id="PRO_0000250901" description="NADH-quinone oxidoreductase subunit I">
    <location>
        <begin position="1"/>
        <end position="179"/>
    </location>
</feature>
<feature type="domain" description="4Fe-4S ferredoxin-type 1" evidence="1">
    <location>
        <begin position="45"/>
        <end position="74"/>
    </location>
</feature>
<feature type="domain" description="4Fe-4S ferredoxin-type 2" evidence="1">
    <location>
        <begin position="90"/>
        <end position="119"/>
    </location>
</feature>
<feature type="region of interest" description="Disordered" evidence="2">
    <location>
        <begin position="146"/>
        <end position="179"/>
    </location>
</feature>
<feature type="compositionally biased region" description="Basic and acidic residues" evidence="2">
    <location>
        <begin position="168"/>
        <end position="179"/>
    </location>
</feature>
<feature type="binding site" evidence="1">
    <location>
        <position position="54"/>
    </location>
    <ligand>
        <name>[4Fe-4S] cluster</name>
        <dbReference type="ChEBI" id="CHEBI:49883"/>
        <label>1</label>
    </ligand>
</feature>
<feature type="binding site" evidence="1">
    <location>
        <position position="57"/>
    </location>
    <ligand>
        <name>[4Fe-4S] cluster</name>
        <dbReference type="ChEBI" id="CHEBI:49883"/>
        <label>1</label>
    </ligand>
</feature>
<feature type="binding site" evidence="1">
    <location>
        <position position="60"/>
    </location>
    <ligand>
        <name>[4Fe-4S] cluster</name>
        <dbReference type="ChEBI" id="CHEBI:49883"/>
        <label>1</label>
    </ligand>
</feature>
<feature type="binding site" evidence="1">
    <location>
        <position position="64"/>
    </location>
    <ligand>
        <name>[4Fe-4S] cluster</name>
        <dbReference type="ChEBI" id="CHEBI:49883"/>
        <label>2</label>
    </ligand>
</feature>
<feature type="binding site" evidence="1">
    <location>
        <position position="99"/>
    </location>
    <ligand>
        <name>[4Fe-4S] cluster</name>
        <dbReference type="ChEBI" id="CHEBI:49883"/>
        <label>2</label>
    </ligand>
</feature>
<feature type="binding site" evidence="1">
    <location>
        <position position="102"/>
    </location>
    <ligand>
        <name>[4Fe-4S] cluster</name>
        <dbReference type="ChEBI" id="CHEBI:49883"/>
        <label>2</label>
    </ligand>
</feature>
<feature type="binding site" evidence="1">
    <location>
        <position position="105"/>
    </location>
    <ligand>
        <name>[4Fe-4S] cluster</name>
        <dbReference type="ChEBI" id="CHEBI:49883"/>
        <label>2</label>
    </ligand>
</feature>
<feature type="binding site" evidence="1">
    <location>
        <position position="109"/>
    </location>
    <ligand>
        <name>[4Fe-4S] cluster</name>
        <dbReference type="ChEBI" id="CHEBI:49883"/>
        <label>1</label>
    </ligand>
</feature>
<proteinExistence type="inferred from homology"/>
<keyword id="KW-0004">4Fe-4S</keyword>
<keyword id="KW-1003">Cell membrane</keyword>
<keyword id="KW-0408">Iron</keyword>
<keyword id="KW-0411">Iron-sulfur</keyword>
<keyword id="KW-0472">Membrane</keyword>
<keyword id="KW-0479">Metal-binding</keyword>
<keyword id="KW-0520">NAD</keyword>
<keyword id="KW-0874">Quinone</keyword>
<keyword id="KW-0677">Repeat</keyword>
<keyword id="KW-1278">Translocase</keyword>
<keyword id="KW-0830">Ubiquinone</keyword>
<gene>
    <name evidence="1" type="primary">nuoI</name>
    <name type="ordered locus">Dgeo_0917</name>
</gene>